<organism>
    <name type="scientific">Rattus norvegicus</name>
    <name type="common">Rat</name>
    <dbReference type="NCBI Taxonomy" id="10116"/>
    <lineage>
        <taxon>Eukaryota</taxon>
        <taxon>Metazoa</taxon>
        <taxon>Chordata</taxon>
        <taxon>Craniata</taxon>
        <taxon>Vertebrata</taxon>
        <taxon>Euteleostomi</taxon>
        <taxon>Mammalia</taxon>
        <taxon>Eutheria</taxon>
        <taxon>Euarchontoglires</taxon>
        <taxon>Glires</taxon>
        <taxon>Rodentia</taxon>
        <taxon>Myomorpha</taxon>
        <taxon>Muroidea</taxon>
        <taxon>Muridae</taxon>
        <taxon>Murinae</taxon>
        <taxon>Rattus</taxon>
    </lineage>
</organism>
<accession>Q920M2</accession>
<feature type="chain" id="PRO_0000056083" description="RING finger protein 39">
    <location>
        <begin position="1"/>
        <end position="352"/>
    </location>
</feature>
<feature type="domain" description="B30.2/SPRY" evidence="3">
    <location>
        <begin position="142"/>
        <end position="352"/>
    </location>
</feature>
<feature type="zinc finger region" description="RING-type" evidence="2">
    <location>
        <begin position="20"/>
        <end position="67"/>
    </location>
</feature>
<feature type="region of interest" description="Disordered" evidence="4">
    <location>
        <begin position="98"/>
        <end position="118"/>
    </location>
</feature>
<protein>
    <recommendedName>
        <fullName>RING finger protein 39</fullName>
        <ecNumber evidence="1">2.3.2.27</ecNumber>
    </recommendedName>
    <alternativeName>
        <fullName>LTP-induced RING finger protein</fullName>
    </alternativeName>
</protein>
<dbReference type="EC" id="2.3.2.27" evidence="1"/>
<dbReference type="EMBL" id="AB070897">
    <property type="protein sequence ID" value="BAB70703.1"/>
    <property type="molecule type" value="mRNA"/>
</dbReference>
<dbReference type="EMBL" id="BX883051">
    <property type="protein sequence ID" value="CAE84060.1"/>
    <property type="molecule type" value="Genomic_DNA"/>
</dbReference>
<dbReference type="RefSeq" id="NP_599201.1">
    <property type="nucleotide sequence ID" value="NM_134374.2"/>
</dbReference>
<dbReference type="SMR" id="Q920M2"/>
<dbReference type="FunCoup" id="Q920M2">
    <property type="interactions" value="20"/>
</dbReference>
<dbReference type="STRING" id="10116.ENSRNOP00000001014"/>
<dbReference type="GlyGen" id="Q920M2">
    <property type="glycosylation" value="1 site"/>
</dbReference>
<dbReference type="iPTMnet" id="Q920M2"/>
<dbReference type="PhosphoSitePlus" id="Q920M2"/>
<dbReference type="jPOST" id="Q920M2"/>
<dbReference type="PaxDb" id="10116-ENSRNOP00000001014"/>
<dbReference type="Ensembl" id="ENSRNOT00000001014.3">
    <property type="protein sequence ID" value="ENSRNOP00000001014.1"/>
    <property type="gene ID" value="ENSRNOG00000000781.4"/>
</dbReference>
<dbReference type="GeneID" id="171387"/>
<dbReference type="KEGG" id="rno:171387"/>
<dbReference type="UCSC" id="RGD:628854">
    <property type="organism name" value="rat"/>
</dbReference>
<dbReference type="AGR" id="RGD:628854"/>
<dbReference type="CTD" id="80352"/>
<dbReference type="RGD" id="628854">
    <property type="gene designation" value="Rnf39"/>
</dbReference>
<dbReference type="eggNOG" id="KOG2177">
    <property type="taxonomic scope" value="Eukaryota"/>
</dbReference>
<dbReference type="GeneTree" id="ENSGT00940000162641"/>
<dbReference type="HOGENOM" id="CLU_013137_7_5_1"/>
<dbReference type="InParanoid" id="Q920M2"/>
<dbReference type="OMA" id="HATLRIV"/>
<dbReference type="OrthoDB" id="37112at9989"/>
<dbReference type="PhylomeDB" id="Q920M2"/>
<dbReference type="TreeFam" id="TF317532"/>
<dbReference type="UniPathway" id="UPA00143"/>
<dbReference type="PRO" id="PR:Q920M2"/>
<dbReference type="Proteomes" id="UP000002494">
    <property type="component" value="Chromosome 20"/>
</dbReference>
<dbReference type="Bgee" id="ENSRNOG00000000781">
    <property type="expression patterns" value="Expressed in esophagus and 20 other cell types or tissues"/>
</dbReference>
<dbReference type="GO" id="GO:0005737">
    <property type="term" value="C:cytoplasm"/>
    <property type="evidence" value="ECO:0000266"/>
    <property type="project" value="RGD"/>
</dbReference>
<dbReference type="GO" id="GO:0061630">
    <property type="term" value="F:ubiquitin protein ligase activity"/>
    <property type="evidence" value="ECO:0000266"/>
    <property type="project" value="RGD"/>
</dbReference>
<dbReference type="GO" id="GO:0008270">
    <property type="term" value="F:zinc ion binding"/>
    <property type="evidence" value="ECO:0007669"/>
    <property type="project" value="UniProtKB-KW"/>
</dbReference>
<dbReference type="GO" id="GO:0045087">
    <property type="term" value="P:innate immune response"/>
    <property type="evidence" value="ECO:0000318"/>
    <property type="project" value="GO_Central"/>
</dbReference>
<dbReference type="GO" id="GO:0039532">
    <property type="term" value="P:negative regulation of cytoplasmic pattern recognition receptor signaling pathway"/>
    <property type="evidence" value="ECO:0000266"/>
    <property type="project" value="RGD"/>
</dbReference>
<dbReference type="GO" id="GO:0141111">
    <property type="term" value="P:positive regulation of cGAS/STING signaling pathway"/>
    <property type="evidence" value="ECO:0000266"/>
    <property type="project" value="RGD"/>
</dbReference>
<dbReference type="GO" id="GO:0070534">
    <property type="term" value="P:protein K63-linked ubiquitination"/>
    <property type="evidence" value="ECO:0000266"/>
    <property type="project" value="RGD"/>
</dbReference>
<dbReference type="GO" id="GO:0048168">
    <property type="term" value="P:regulation of neuronal synaptic plasticity"/>
    <property type="evidence" value="ECO:0000303"/>
    <property type="project" value="RGD"/>
</dbReference>
<dbReference type="CDD" id="cd16592">
    <property type="entry name" value="RING-HC_RNF39"/>
    <property type="match status" value="1"/>
</dbReference>
<dbReference type="Gene3D" id="2.60.120.920">
    <property type="match status" value="1"/>
</dbReference>
<dbReference type="Gene3D" id="3.30.40.10">
    <property type="entry name" value="Zinc/RING finger domain, C3HC4 (zinc finger)"/>
    <property type="match status" value="1"/>
</dbReference>
<dbReference type="InterPro" id="IPR001870">
    <property type="entry name" value="B30.2/SPRY"/>
</dbReference>
<dbReference type="InterPro" id="IPR043136">
    <property type="entry name" value="B30.2/SPRY_sf"/>
</dbReference>
<dbReference type="InterPro" id="IPR003879">
    <property type="entry name" value="Butyrophylin_SPRY"/>
</dbReference>
<dbReference type="InterPro" id="IPR013320">
    <property type="entry name" value="ConA-like_dom_sf"/>
</dbReference>
<dbReference type="InterPro" id="IPR006574">
    <property type="entry name" value="PRY"/>
</dbReference>
<dbReference type="InterPro" id="IPR003877">
    <property type="entry name" value="SPRY_dom"/>
</dbReference>
<dbReference type="InterPro" id="IPR050143">
    <property type="entry name" value="TRIM/RBCC"/>
</dbReference>
<dbReference type="InterPro" id="IPR027370">
    <property type="entry name" value="Znf-RING_euk"/>
</dbReference>
<dbReference type="InterPro" id="IPR001841">
    <property type="entry name" value="Znf_RING"/>
</dbReference>
<dbReference type="InterPro" id="IPR013083">
    <property type="entry name" value="Znf_RING/FYVE/PHD"/>
</dbReference>
<dbReference type="InterPro" id="IPR017907">
    <property type="entry name" value="Znf_RING_CS"/>
</dbReference>
<dbReference type="PANTHER" id="PTHR24103">
    <property type="entry name" value="E3 UBIQUITIN-PROTEIN LIGASE TRIM"/>
    <property type="match status" value="1"/>
</dbReference>
<dbReference type="Pfam" id="PF13765">
    <property type="entry name" value="PRY"/>
    <property type="match status" value="1"/>
</dbReference>
<dbReference type="Pfam" id="PF00622">
    <property type="entry name" value="SPRY"/>
    <property type="match status" value="1"/>
</dbReference>
<dbReference type="Pfam" id="PF13445">
    <property type="entry name" value="zf-RING_UBOX"/>
    <property type="match status" value="1"/>
</dbReference>
<dbReference type="PRINTS" id="PR01407">
    <property type="entry name" value="BUTYPHLNCDUF"/>
</dbReference>
<dbReference type="SMART" id="SM00589">
    <property type="entry name" value="PRY"/>
    <property type="match status" value="1"/>
</dbReference>
<dbReference type="SMART" id="SM00184">
    <property type="entry name" value="RING"/>
    <property type="match status" value="1"/>
</dbReference>
<dbReference type="SMART" id="SM00449">
    <property type="entry name" value="SPRY"/>
    <property type="match status" value="1"/>
</dbReference>
<dbReference type="SUPFAM" id="SSF49899">
    <property type="entry name" value="Concanavalin A-like lectins/glucanases"/>
    <property type="match status" value="1"/>
</dbReference>
<dbReference type="SUPFAM" id="SSF57850">
    <property type="entry name" value="RING/U-box"/>
    <property type="match status" value="1"/>
</dbReference>
<dbReference type="PROSITE" id="PS50188">
    <property type="entry name" value="B302_SPRY"/>
    <property type="match status" value="1"/>
</dbReference>
<dbReference type="PROSITE" id="PS00518">
    <property type="entry name" value="ZF_RING_1"/>
    <property type="match status" value="1"/>
</dbReference>
<dbReference type="PROSITE" id="PS50089">
    <property type="entry name" value="ZF_RING_2"/>
    <property type="match status" value="1"/>
</dbReference>
<evidence type="ECO:0000250" key="1">
    <source>
        <dbReference type="UniProtKB" id="Q9H2S5"/>
    </source>
</evidence>
<evidence type="ECO:0000255" key="2">
    <source>
        <dbReference type="PROSITE-ProRule" id="PRU00175"/>
    </source>
</evidence>
<evidence type="ECO:0000255" key="3">
    <source>
        <dbReference type="PROSITE-ProRule" id="PRU00548"/>
    </source>
</evidence>
<evidence type="ECO:0000256" key="4">
    <source>
        <dbReference type="SAM" id="MobiDB-lite"/>
    </source>
</evidence>
<evidence type="ECO:0000269" key="5">
    <source>
    </source>
</evidence>
<gene>
    <name type="primary">Rnf39</name>
    <name type="synonym">Lirf</name>
</gene>
<reference key="1">
    <citation type="journal article" date="2001" name="Biochem. Biophys. Res. Commun.">
        <title>LIRF, a gene induced during hippocampal long-term potentiation as an immediate-early gene, encodes a novel RING finger protein.</title>
        <authorList>
            <person name="Matsuo R."/>
            <person name="Asada A."/>
            <person name="Fujitani K."/>
            <person name="Inokuchi K."/>
        </authorList>
    </citation>
    <scope>NUCLEOTIDE SEQUENCE [MRNA]</scope>
    <scope>SUBCELLULAR LOCATION</scope>
    <scope>TISSUE SPECIFICITY</scope>
    <source>
        <strain>Wistar</strain>
    </source>
</reference>
<reference key="2">
    <citation type="journal article" date="2004" name="Genome Res.">
        <title>The genomic sequence and comparative analysis of the rat major histocompatibility complex.</title>
        <authorList>
            <person name="Hurt P."/>
            <person name="Walter L."/>
            <person name="Sudbrak R."/>
            <person name="Klages S."/>
            <person name="Mueller I."/>
            <person name="Shiina T."/>
            <person name="Inoko H."/>
            <person name="Lehrach H."/>
            <person name="Guenther E."/>
            <person name="Reinhardt R."/>
            <person name="Himmelbauer H."/>
        </authorList>
    </citation>
    <scope>NUCLEOTIDE SEQUENCE [LARGE SCALE GENOMIC DNA]</scope>
    <source>
        <strain>Brown Norway</strain>
    </source>
</reference>
<reference key="3">
    <citation type="journal article" date="2000" name="J. Neurochem.">
        <title>Identification and cataloging of genes induced by long-lasting long-term potentiation in awake rats.</title>
        <authorList>
            <person name="Matsuo R."/>
            <person name="Murayama A."/>
            <person name="Saitoh Y."/>
            <person name="Sakaki Y."/>
            <person name="Inokuchi K."/>
        </authorList>
    </citation>
    <scope>FUNCTION</scope>
</reference>
<name>RNF39_RAT</name>
<sequence>MEVPELGPGLVERLEQLATCPLCGGPFEDPVLLACEHSFCRSCLARCWGSPAAPGSEEATPSCPCCGQPCPRRSLRSNVRLAVEVRISRGLREKLAEPGARTGRRRGGRIPTMGCLDPQGEDMRKTWRRFDVPVPKSSNSEEDLPEDYPVVKNMLHRLTADLTLDPRTAHRDLLISSDYRGVSLAPPGTPVPLDSPERFDRLRAVLGAQGFASGRHCWEVETAEGACFRDSLAKDEDAGESCYAVGAAGESVTRKGLIKLCPSEAIWAVEGRGGRLWALTAPEPTLLGGARPPPQRIRVDLDWERGRVAFYDGRSLDLLFAFQAPGPLGERVFPLLCTCDPRAPLRIVPGEA</sequence>
<proteinExistence type="evidence at transcript level"/>
<keyword id="KW-0963">Cytoplasm</keyword>
<keyword id="KW-0479">Metal-binding</keyword>
<keyword id="KW-1185">Reference proteome</keyword>
<keyword id="KW-0808">Transferase</keyword>
<keyword id="KW-0862">Zinc</keyword>
<keyword id="KW-0863">Zinc-finger</keyword>
<comment type="function">
    <text evidence="1">Plays an inhibitory role in anti-RNA viral innate immunity by targeting the adapter DDX3X and promoting its 'Lys-48'-linked polyubiquitination. Alternatively, enhances the cGAS-STING pathway activation by promoting 'Lys-63'-linked ubiquitination of STING1, facilitating the STING1-TBK1 complex formation and STING1 activation.</text>
</comment>
<comment type="catalytic activity">
    <reaction evidence="1">
        <text>S-ubiquitinyl-[E2 ubiquitin-conjugating enzyme]-L-cysteine + [acceptor protein]-L-lysine = [E2 ubiquitin-conjugating enzyme]-L-cysteine + N(6)-ubiquitinyl-[acceptor protein]-L-lysine.</text>
        <dbReference type="EC" id="2.3.2.27"/>
    </reaction>
</comment>
<comment type="pathway">
    <text evidence="1">Protein modification; protein ubiquitination.</text>
</comment>
<comment type="subcellular location">
    <subcellularLocation>
        <location evidence="1">Cytoplasm</location>
    </subcellularLocation>
</comment>
<comment type="tissue specificity">
    <text evidence="5">Expressed in the hippocampus. Expression is rapidly up-regulated in granule cells of the dentate gyrus after LTP induction.</text>
</comment>